<feature type="signal peptide" evidence="4">
    <location>
        <begin position="1"/>
        <end position="22"/>
    </location>
</feature>
<feature type="propeptide" id="PRO_0000438903" description="Activation peptide">
    <location>
        <begin position="23"/>
        <end position="30"/>
    </location>
</feature>
<feature type="chain" id="PRO_0000438904" description="Trypsin gamma">
    <location>
        <begin position="31"/>
        <end position="253"/>
    </location>
</feature>
<feature type="domain" description="Peptidase S1" evidence="3">
    <location>
        <begin position="31"/>
        <end position="253"/>
    </location>
</feature>
<feature type="active site" description="Charge relay system" evidence="3">
    <location>
        <position position="71"/>
    </location>
</feature>
<feature type="active site" description="Charge relay system" evidence="3">
    <location>
        <position position="116"/>
    </location>
</feature>
<feature type="active site" description="Charge relay system" evidence="3">
    <location>
        <position position="210"/>
    </location>
</feature>
<feature type="site" description="Required for specificity" evidence="4">
    <location>
        <position position="204"/>
    </location>
</feature>
<feature type="disulfide bond" evidence="3">
    <location>
        <begin position="56"/>
        <end position="72"/>
    </location>
</feature>
<feature type="disulfide bond" evidence="3">
    <location>
        <begin position="180"/>
        <end position="197"/>
    </location>
</feature>
<feature type="disulfide bond" evidence="3">
    <location>
        <begin position="206"/>
        <end position="230"/>
    </location>
</feature>
<keyword id="KW-1015">Disulfide bond</keyword>
<keyword id="KW-0378">Hydrolase</keyword>
<keyword id="KW-0645">Protease</keyword>
<keyword id="KW-0964">Secreted</keyword>
<keyword id="KW-0720">Serine protease</keyword>
<keyword id="KW-0732">Signal</keyword>
<keyword id="KW-0865">Zymogen</keyword>
<proteinExistence type="inferred from homology"/>
<comment type="catalytic activity">
    <reaction>
        <text>Preferential cleavage: Arg-|-Xaa, Lys-|-Xaa.</text>
        <dbReference type="EC" id="3.4.21.4"/>
    </reaction>
</comment>
<comment type="subcellular location">
    <subcellularLocation>
        <location evidence="2">Secreted</location>
        <location evidence="2">Extracellular space</location>
    </subcellularLocation>
</comment>
<comment type="similarity">
    <text evidence="3">Belongs to the peptidase S1 family.</text>
</comment>
<evidence type="ECO:0000250" key="1">
    <source>
        <dbReference type="UniProtKB" id="C0HKA3"/>
    </source>
</evidence>
<evidence type="ECO:0000250" key="2">
    <source>
        <dbReference type="UniProtKB" id="P04814"/>
    </source>
</evidence>
<evidence type="ECO:0000255" key="3">
    <source>
        <dbReference type="PROSITE-ProRule" id="PRU00274"/>
    </source>
</evidence>
<evidence type="ECO:0000305" key="4"/>
<sequence length="253" mass="25965">MLKFVILLSAVACALGGTIPEGLLPQLDGRIVGGTATTISSFPWQISLQRSGSHSCGGSIYTDRVIVTAAHCLQSVSTSSLQIRAGSSYWNSGGVTVKVSSFKNHEGYSARTMVNDIAVIRLSSSLSFSSTIKSISLASSNPPNGAAASVSGWGTQSSGSNSIPSQLQYVNVNIVSQSRCASSTYGYGSDIRDTMICAAASGKDACQGDSGGPLVSGGVLVGVVSWGQGCAYSNYPGVYASVADLRAWVVRNA</sequence>
<dbReference type="EC" id="3.4.21.4" evidence="3"/>
<dbReference type="EMBL" id="U40653">
    <property type="protein sequence ID" value="AAA83242.1"/>
    <property type="molecule type" value="Genomic_DNA"/>
</dbReference>
<dbReference type="SMR" id="C0HKA6"/>
<dbReference type="OrthoDB" id="10059102at2759"/>
<dbReference type="GO" id="GO:0005576">
    <property type="term" value="C:extracellular region"/>
    <property type="evidence" value="ECO:0007669"/>
    <property type="project" value="UniProtKB-SubCell"/>
</dbReference>
<dbReference type="GO" id="GO:0004252">
    <property type="term" value="F:serine-type endopeptidase activity"/>
    <property type="evidence" value="ECO:0007669"/>
    <property type="project" value="UniProtKB-EC"/>
</dbReference>
<dbReference type="GO" id="GO:0006508">
    <property type="term" value="P:proteolysis"/>
    <property type="evidence" value="ECO:0007669"/>
    <property type="project" value="UniProtKB-KW"/>
</dbReference>
<dbReference type="CDD" id="cd00190">
    <property type="entry name" value="Tryp_SPc"/>
    <property type="match status" value="1"/>
</dbReference>
<dbReference type="FunFam" id="2.40.10.10:FF:000077">
    <property type="entry name" value="Predicted protein"/>
    <property type="match status" value="1"/>
</dbReference>
<dbReference type="Gene3D" id="2.40.10.10">
    <property type="entry name" value="Trypsin-like serine proteases"/>
    <property type="match status" value="2"/>
</dbReference>
<dbReference type="InterPro" id="IPR050430">
    <property type="entry name" value="Peptidase_S1"/>
</dbReference>
<dbReference type="InterPro" id="IPR009003">
    <property type="entry name" value="Peptidase_S1_PA"/>
</dbReference>
<dbReference type="InterPro" id="IPR043504">
    <property type="entry name" value="Peptidase_S1_PA_chymotrypsin"/>
</dbReference>
<dbReference type="InterPro" id="IPR001314">
    <property type="entry name" value="Peptidase_S1A"/>
</dbReference>
<dbReference type="InterPro" id="IPR001254">
    <property type="entry name" value="Trypsin_dom"/>
</dbReference>
<dbReference type="InterPro" id="IPR018114">
    <property type="entry name" value="TRYPSIN_HIS"/>
</dbReference>
<dbReference type="InterPro" id="IPR033116">
    <property type="entry name" value="TRYPSIN_SER"/>
</dbReference>
<dbReference type="PANTHER" id="PTHR24276:SF91">
    <property type="entry name" value="AT26814P-RELATED"/>
    <property type="match status" value="1"/>
</dbReference>
<dbReference type="PANTHER" id="PTHR24276">
    <property type="entry name" value="POLYSERASE-RELATED"/>
    <property type="match status" value="1"/>
</dbReference>
<dbReference type="Pfam" id="PF00089">
    <property type="entry name" value="Trypsin"/>
    <property type="match status" value="1"/>
</dbReference>
<dbReference type="PRINTS" id="PR00722">
    <property type="entry name" value="CHYMOTRYPSIN"/>
</dbReference>
<dbReference type="SMART" id="SM00020">
    <property type="entry name" value="Tryp_SPc"/>
    <property type="match status" value="1"/>
</dbReference>
<dbReference type="SUPFAM" id="SSF50494">
    <property type="entry name" value="Trypsin-like serine proteases"/>
    <property type="match status" value="1"/>
</dbReference>
<dbReference type="PROSITE" id="PS50240">
    <property type="entry name" value="TRYPSIN_DOM"/>
    <property type="match status" value="1"/>
</dbReference>
<dbReference type="PROSITE" id="PS00134">
    <property type="entry name" value="TRYPSIN_HIS"/>
    <property type="match status" value="1"/>
</dbReference>
<dbReference type="PROSITE" id="PS00135">
    <property type="entry name" value="TRYPSIN_SER"/>
    <property type="match status" value="1"/>
</dbReference>
<accession>C0HKA6</accession>
<accession>P54626</accession>
<name>TRYGT_DROER</name>
<organism>
    <name type="scientific">Drosophila erecta</name>
    <name type="common">Fruit fly</name>
    <dbReference type="NCBI Taxonomy" id="7220"/>
    <lineage>
        <taxon>Eukaryota</taxon>
        <taxon>Metazoa</taxon>
        <taxon>Ecdysozoa</taxon>
        <taxon>Arthropoda</taxon>
        <taxon>Hexapoda</taxon>
        <taxon>Insecta</taxon>
        <taxon>Pterygota</taxon>
        <taxon>Neoptera</taxon>
        <taxon>Endopterygota</taxon>
        <taxon>Diptera</taxon>
        <taxon>Brachycera</taxon>
        <taxon>Muscomorpha</taxon>
        <taxon>Ephydroidea</taxon>
        <taxon>Drosophilidae</taxon>
        <taxon>Drosophila</taxon>
        <taxon>Sophophora</taxon>
    </lineage>
</organism>
<gene>
    <name evidence="1" type="primary">gammaTry</name>
</gene>
<protein>
    <recommendedName>
        <fullName evidence="1">Trypsin gamma</fullName>
        <ecNumber evidence="3">3.4.21.4</ecNumber>
    </recommendedName>
</protein>
<reference key="1">
    <citation type="journal article" date="1999" name="Mol. Biol. Evol.">
        <title>Concerted evolution within a trypsin gene cluster in Drosophila.</title>
        <authorList>
            <person name="Wang S."/>
            <person name="Magoulas C."/>
            <person name="Hickey D.A."/>
        </authorList>
    </citation>
    <scope>NUCLEOTIDE SEQUENCE [GENOMIC DNA]</scope>
</reference>